<name>TBCC_MOUSE</name>
<protein>
    <recommendedName>
        <fullName>Tubulin-specific chaperone C</fullName>
    </recommendedName>
    <alternativeName>
        <fullName>Tubulin-folding cofactor C</fullName>
        <shortName>CFC</shortName>
    </alternativeName>
</protein>
<sequence>MEGVDCSMALADAAAGSPRDLSLVPERLQRREQERQIEVERRKQKRQDQEVEEEKSGFFAAAFARERAAVEELLRGEASAERLEEAANRLQGLRKLLNDSVLFLAAYDLRQGQAALAQLQAVLTERRQELQPKKRFAFKARKKDAAGTAQVDAAPVTSAAPSPPVTKEEEGAPGASWACGFSNLESQDLEKRAEELHQRDVLLSDLTNCTVKLCGNPNTLRLAKARGCKVLCGPVTTSVFLEDCRDCVLAVACQQLRVHTTKDTRVFLQVTSRAIVEDCSGIQFAPYTWSYPGIDKDFQDSGLDRSKNNWDQVDDFNWLARNVASPNWSILPEEERDIQWD</sequence>
<evidence type="ECO:0000250" key="1"/>
<evidence type="ECO:0000250" key="2">
    <source>
        <dbReference type="UniProtKB" id="Q15814"/>
    </source>
</evidence>
<evidence type="ECO:0000255" key="3">
    <source>
        <dbReference type="PROSITE-ProRule" id="PRU00659"/>
    </source>
</evidence>
<evidence type="ECO:0000256" key="4">
    <source>
        <dbReference type="SAM" id="MobiDB-lite"/>
    </source>
</evidence>
<evidence type="ECO:0000305" key="5"/>
<proteinExistence type="evidence at protein level"/>
<comment type="function">
    <text evidence="1">Tubulin-folding protein; involved in the final step of the tubulin folding pathway.</text>
</comment>
<comment type="subunit">
    <text evidence="1">Supercomplex made of cofactors A to E. Cofactors A and D function by capturing and stabilizing tubulin in a quasi-native conformation. Cofactor E binds to the cofactor D-tubulin complex; interaction with cofactor C then causes the release of tubulin polypeptides that are committed to the native state (By similarity).</text>
</comment>
<comment type="subcellular location">
    <subcellularLocation>
        <location evidence="1">Cytoplasm</location>
    </subcellularLocation>
    <text evidence="1">Detected predominantly in the photoreceptor connecting cilium.</text>
</comment>
<comment type="similarity">
    <text evidence="5">Belongs to the TBCC family.</text>
</comment>
<accession>Q8VCN9</accession>
<accession>Q3V242</accession>
<feature type="chain" id="PRO_0000285107" description="Tubulin-specific chaperone C">
    <location>
        <begin position="1"/>
        <end position="341"/>
    </location>
</feature>
<feature type="domain" description="C-CAP/cofactor C-like" evidence="3">
    <location>
        <begin position="163"/>
        <end position="318"/>
    </location>
</feature>
<feature type="region of interest" description="Disordered" evidence="4">
    <location>
        <begin position="34"/>
        <end position="55"/>
    </location>
</feature>
<feature type="region of interest" description="Disordered" evidence="4">
    <location>
        <begin position="148"/>
        <end position="173"/>
    </location>
</feature>
<feature type="compositionally biased region" description="Basic and acidic residues" evidence="4">
    <location>
        <begin position="34"/>
        <end position="49"/>
    </location>
</feature>
<feature type="modified residue" description="N-acetylmethionine" evidence="2">
    <location>
        <position position="1"/>
    </location>
</feature>
<feature type="modified residue" description="Phosphoserine" evidence="2">
    <location>
        <position position="79"/>
    </location>
</feature>
<feature type="sequence conflict" description="In Ref. 1; BAE20957." evidence="5" ref="1">
    <original>T</original>
    <variation>A</variation>
    <location>
        <position position="157"/>
    </location>
</feature>
<gene>
    <name type="primary">Tbcc</name>
</gene>
<dbReference type="EMBL" id="AK132036">
    <property type="protein sequence ID" value="BAE20957.1"/>
    <property type="molecule type" value="mRNA"/>
</dbReference>
<dbReference type="EMBL" id="BC019476">
    <property type="protein sequence ID" value="AAH19476.1"/>
    <property type="molecule type" value="mRNA"/>
</dbReference>
<dbReference type="EMBL" id="BC083164">
    <property type="protein sequence ID" value="AAH83164.1"/>
    <property type="molecule type" value="mRNA"/>
</dbReference>
<dbReference type="CCDS" id="CCDS28843.1"/>
<dbReference type="RefSeq" id="NP_848472.2">
    <property type="nucleotide sequence ID" value="NM_178385.3"/>
</dbReference>
<dbReference type="SMR" id="Q8VCN9"/>
<dbReference type="BioGRID" id="215535">
    <property type="interactions" value="2"/>
</dbReference>
<dbReference type="FunCoup" id="Q8VCN9">
    <property type="interactions" value="1879"/>
</dbReference>
<dbReference type="STRING" id="10090.ENSMUSP00000048696"/>
<dbReference type="iPTMnet" id="Q8VCN9"/>
<dbReference type="PhosphoSitePlus" id="Q8VCN9"/>
<dbReference type="REPRODUCTION-2DPAGE" id="Q8VCN9"/>
<dbReference type="PaxDb" id="10090-ENSMUSP00000048696"/>
<dbReference type="PeptideAtlas" id="Q8VCN9"/>
<dbReference type="ProteomicsDB" id="263076"/>
<dbReference type="Pumba" id="Q8VCN9"/>
<dbReference type="DNASU" id="72726"/>
<dbReference type="GeneID" id="72726"/>
<dbReference type="KEGG" id="mmu:72726"/>
<dbReference type="UCSC" id="uc008cum.1">
    <property type="organism name" value="mouse"/>
</dbReference>
<dbReference type="AGR" id="MGI:1919976"/>
<dbReference type="CTD" id="6903"/>
<dbReference type="MGI" id="MGI:1919976">
    <property type="gene designation" value="Tbcc"/>
</dbReference>
<dbReference type="eggNOG" id="KOG2512">
    <property type="taxonomic scope" value="Eukaryota"/>
</dbReference>
<dbReference type="InParanoid" id="Q8VCN9"/>
<dbReference type="OrthoDB" id="194775at2759"/>
<dbReference type="PhylomeDB" id="Q8VCN9"/>
<dbReference type="TreeFam" id="TF105832"/>
<dbReference type="BioGRID-ORCS" id="72726">
    <property type="hits" value="17 hits in 79 CRISPR screens"/>
</dbReference>
<dbReference type="PRO" id="PR:Q8VCN9"/>
<dbReference type="Proteomes" id="UP000000589">
    <property type="component" value="Unplaced"/>
</dbReference>
<dbReference type="RNAct" id="Q8VCN9">
    <property type="molecule type" value="protein"/>
</dbReference>
<dbReference type="GO" id="GO:0005737">
    <property type="term" value="C:cytoplasm"/>
    <property type="evidence" value="ECO:0000250"/>
    <property type="project" value="UniProtKB"/>
</dbReference>
<dbReference type="GO" id="GO:0032391">
    <property type="term" value="C:photoreceptor connecting cilium"/>
    <property type="evidence" value="ECO:0000250"/>
    <property type="project" value="UniProtKB"/>
</dbReference>
<dbReference type="GO" id="GO:0003924">
    <property type="term" value="F:GTPase activity"/>
    <property type="evidence" value="ECO:0000250"/>
    <property type="project" value="UniProtKB"/>
</dbReference>
<dbReference type="GO" id="GO:0015631">
    <property type="term" value="F:tubulin binding"/>
    <property type="evidence" value="ECO:0007669"/>
    <property type="project" value="InterPro"/>
</dbReference>
<dbReference type="GO" id="GO:0007023">
    <property type="term" value="P:post-chaperonin tubulin folding pathway"/>
    <property type="evidence" value="ECO:0000250"/>
    <property type="project" value="UniProtKB"/>
</dbReference>
<dbReference type="FunFam" id="1.20.58.1250:FF:000001">
    <property type="entry name" value="Tubulin-specific chaperone C"/>
    <property type="match status" value="1"/>
</dbReference>
<dbReference type="FunFam" id="2.160.20.70:FF:000007">
    <property type="entry name" value="tubulin-specific chaperone C"/>
    <property type="match status" value="1"/>
</dbReference>
<dbReference type="Gene3D" id="2.160.20.70">
    <property type="match status" value="1"/>
</dbReference>
<dbReference type="Gene3D" id="1.20.58.1250">
    <property type="entry name" value="Tubulin Binding Cofactor C, N-terminal domain"/>
    <property type="match status" value="1"/>
</dbReference>
<dbReference type="InterPro" id="IPR017901">
    <property type="entry name" value="C-CAP_CF_C-like"/>
</dbReference>
<dbReference type="InterPro" id="IPR016098">
    <property type="entry name" value="CAP/MinC_C"/>
</dbReference>
<dbReference type="InterPro" id="IPR006599">
    <property type="entry name" value="CARP_motif"/>
</dbReference>
<dbReference type="InterPro" id="IPR027684">
    <property type="entry name" value="TBCC"/>
</dbReference>
<dbReference type="InterPro" id="IPR031925">
    <property type="entry name" value="TBCC_N"/>
</dbReference>
<dbReference type="InterPro" id="IPR038397">
    <property type="entry name" value="TBCC_N_sf"/>
</dbReference>
<dbReference type="InterPro" id="IPR012945">
    <property type="entry name" value="Tubulin-bd_cofactor_C_dom"/>
</dbReference>
<dbReference type="PANTHER" id="PTHR15139">
    <property type="entry name" value="TUBULIN FOLDING COFACTOR C"/>
    <property type="match status" value="1"/>
</dbReference>
<dbReference type="PANTHER" id="PTHR15139:SF0">
    <property type="entry name" value="TUBULIN-SPECIFIC CHAPERONE C"/>
    <property type="match status" value="1"/>
</dbReference>
<dbReference type="Pfam" id="PF07986">
    <property type="entry name" value="TBCC"/>
    <property type="match status" value="1"/>
</dbReference>
<dbReference type="Pfam" id="PF16752">
    <property type="entry name" value="TBCC_N"/>
    <property type="match status" value="1"/>
</dbReference>
<dbReference type="SMART" id="SM00673">
    <property type="entry name" value="CARP"/>
    <property type="match status" value="2"/>
</dbReference>
<dbReference type="PROSITE" id="PS51329">
    <property type="entry name" value="C_CAP_COFACTOR_C"/>
    <property type="match status" value="1"/>
</dbReference>
<keyword id="KW-0007">Acetylation</keyword>
<keyword id="KW-0143">Chaperone</keyword>
<keyword id="KW-0963">Cytoplasm</keyword>
<keyword id="KW-0597">Phosphoprotein</keyword>
<keyword id="KW-1185">Reference proteome</keyword>
<reference key="1">
    <citation type="journal article" date="2005" name="Science">
        <title>The transcriptional landscape of the mammalian genome.</title>
        <authorList>
            <person name="Carninci P."/>
            <person name="Kasukawa T."/>
            <person name="Katayama S."/>
            <person name="Gough J."/>
            <person name="Frith M.C."/>
            <person name="Maeda N."/>
            <person name="Oyama R."/>
            <person name="Ravasi T."/>
            <person name="Lenhard B."/>
            <person name="Wells C."/>
            <person name="Kodzius R."/>
            <person name="Shimokawa K."/>
            <person name="Bajic V.B."/>
            <person name="Brenner S.E."/>
            <person name="Batalov S."/>
            <person name="Forrest A.R."/>
            <person name="Zavolan M."/>
            <person name="Davis M.J."/>
            <person name="Wilming L.G."/>
            <person name="Aidinis V."/>
            <person name="Allen J.E."/>
            <person name="Ambesi-Impiombato A."/>
            <person name="Apweiler R."/>
            <person name="Aturaliya R.N."/>
            <person name="Bailey T.L."/>
            <person name="Bansal M."/>
            <person name="Baxter L."/>
            <person name="Beisel K.W."/>
            <person name="Bersano T."/>
            <person name="Bono H."/>
            <person name="Chalk A.M."/>
            <person name="Chiu K.P."/>
            <person name="Choudhary V."/>
            <person name="Christoffels A."/>
            <person name="Clutterbuck D.R."/>
            <person name="Crowe M.L."/>
            <person name="Dalla E."/>
            <person name="Dalrymple B.P."/>
            <person name="de Bono B."/>
            <person name="Della Gatta G."/>
            <person name="di Bernardo D."/>
            <person name="Down T."/>
            <person name="Engstrom P."/>
            <person name="Fagiolini M."/>
            <person name="Faulkner G."/>
            <person name="Fletcher C.F."/>
            <person name="Fukushima T."/>
            <person name="Furuno M."/>
            <person name="Futaki S."/>
            <person name="Gariboldi M."/>
            <person name="Georgii-Hemming P."/>
            <person name="Gingeras T.R."/>
            <person name="Gojobori T."/>
            <person name="Green R.E."/>
            <person name="Gustincich S."/>
            <person name="Harbers M."/>
            <person name="Hayashi Y."/>
            <person name="Hensch T.K."/>
            <person name="Hirokawa N."/>
            <person name="Hill D."/>
            <person name="Huminiecki L."/>
            <person name="Iacono M."/>
            <person name="Ikeo K."/>
            <person name="Iwama A."/>
            <person name="Ishikawa T."/>
            <person name="Jakt M."/>
            <person name="Kanapin A."/>
            <person name="Katoh M."/>
            <person name="Kawasawa Y."/>
            <person name="Kelso J."/>
            <person name="Kitamura H."/>
            <person name="Kitano H."/>
            <person name="Kollias G."/>
            <person name="Krishnan S.P."/>
            <person name="Kruger A."/>
            <person name="Kummerfeld S.K."/>
            <person name="Kurochkin I.V."/>
            <person name="Lareau L.F."/>
            <person name="Lazarevic D."/>
            <person name="Lipovich L."/>
            <person name="Liu J."/>
            <person name="Liuni S."/>
            <person name="McWilliam S."/>
            <person name="Madan Babu M."/>
            <person name="Madera M."/>
            <person name="Marchionni L."/>
            <person name="Matsuda H."/>
            <person name="Matsuzawa S."/>
            <person name="Miki H."/>
            <person name="Mignone F."/>
            <person name="Miyake S."/>
            <person name="Morris K."/>
            <person name="Mottagui-Tabar S."/>
            <person name="Mulder N."/>
            <person name="Nakano N."/>
            <person name="Nakauchi H."/>
            <person name="Ng P."/>
            <person name="Nilsson R."/>
            <person name="Nishiguchi S."/>
            <person name="Nishikawa S."/>
            <person name="Nori F."/>
            <person name="Ohara O."/>
            <person name="Okazaki Y."/>
            <person name="Orlando V."/>
            <person name="Pang K.C."/>
            <person name="Pavan W.J."/>
            <person name="Pavesi G."/>
            <person name="Pesole G."/>
            <person name="Petrovsky N."/>
            <person name="Piazza S."/>
            <person name="Reed J."/>
            <person name="Reid J.F."/>
            <person name="Ring B.Z."/>
            <person name="Ringwald M."/>
            <person name="Rost B."/>
            <person name="Ruan Y."/>
            <person name="Salzberg S.L."/>
            <person name="Sandelin A."/>
            <person name="Schneider C."/>
            <person name="Schoenbach C."/>
            <person name="Sekiguchi K."/>
            <person name="Semple C.A."/>
            <person name="Seno S."/>
            <person name="Sessa L."/>
            <person name="Sheng Y."/>
            <person name="Shibata Y."/>
            <person name="Shimada H."/>
            <person name="Shimada K."/>
            <person name="Silva D."/>
            <person name="Sinclair B."/>
            <person name="Sperling S."/>
            <person name="Stupka E."/>
            <person name="Sugiura K."/>
            <person name="Sultana R."/>
            <person name="Takenaka Y."/>
            <person name="Taki K."/>
            <person name="Tammoja K."/>
            <person name="Tan S.L."/>
            <person name="Tang S."/>
            <person name="Taylor M.S."/>
            <person name="Tegner J."/>
            <person name="Teichmann S.A."/>
            <person name="Ueda H.R."/>
            <person name="van Nimwegen E."/>
            <person name="Verardo R."/>
            <person name="Wei C.L."/>
            <person name="Yagi K."/>
            <person name="Yamanishi H."/>
            <person name="Zabarovsky E."/>
            <person name="Zhu S."/>
            <person name="Zimmer A."/>
            <person name="Hide W."/>
            <person name="Bult C."/>
            <person name="Grimmond S.M."/>
            <person name="Teasdale R.D."/>
            <person name="Liu E.T."/>
            <person name="Brusic V."/>
            <person name="Quackenbush J."/>
            <person name="Wahlestedt C."/>
            <person name="Mattick J.S."/>
            <person name="Hume D.A."/>
            <person name="Kai C."/>
            <person name="Sasaki D."/>
            <person name="Tomaru Y."/>
            <person name="Fukuda S."/>
            <person name="Kanamori-Katayama M."/>
            <person name="Suzuki M."/>
            <person name="Aoki J."/>
            <person name="Arakawa T."/>
            <person name="Iida J."/>
            <person name="Imamura K."/>
            <person name="Itoh M."/>
            <person name="Kato T."/>
            <person name="Kawaji H."/>
            <person name="Kawagashira N."/>
            <person name="Kawashima T."/>
            <person name="Kojima M."/>
            <person name="Kondo S."/>
            <person name="Konno H."/>
            <person name="Nakano K."/>
            <person name="Ninomiya N."/>
            <person name="Nishio T."/>
            <person name="Okada M."/>
            <person name="Plessy C."/>
            <person name="Shibata K."/>
            <person name="Shiraki T."/>
            <person name="Suzuki S."/>
            <person name="Tagami M."/>
            <person name="Waki K."/>
            <person name="Watahiki A."/>
            <person name="Okamura-Oho Y."/>
            <person name="Suzuki H."/>
            <person name="Kawai J."/>
            <person name="Hayashizaki Y."/>
        </authorList>
    </citation>
    <scope>NUCLEOTIDE SEQUENCE [LARGE SCALE MRNA]</scope>
    <source>
        <strain>C57BL/6J</strain>
        <tissue>Hippocampus</tissue>
    </source>
</reference>
<reference key="2">
    <citation type="journal article" date="2004" name="Genome Res.">
        <title>The status, quality, and expansion of the NIH full-length cDNA project: the Mammalian Gene Collection (MGC).</title>
        <authorList>
            <consortium name="The MGC Project Team"/>
        </authorList>
    </citation>
    <scope>NUCLEOTIDE SEQUENCE [LARGE SCALE MRNA]</scope>
    <source>
        <strain>FVB/N</strain>
        <strain>FVB/N-3</strain>
        <tissue>Kidney</tissue>
        <tissue>Mammary tumor</tissue>
    </source>
</reference>
<reference key="3">
    <citation type="journal article" date="2010" name="Cell">
        <title>A tissue-specific atlas of mouse protein phosphorylation and expression.</title>
        <authorList>
            <person name="Huttlin E.L."/>
            <person name="Jedrychowski M.P."/>
            <person name="Elias J.E."/>
            <person name="Goswami T."/>
            <person name="Rad R."/>
            <person name="Beausoleil S.A."/>
            <person name="Villen J."/>
            <person name="Haas W."/>
            <person name="Sowa M.E."/>
            <person name="Gygi S.P."/>
        </authorList>
    </citation>
    <scope>IDENTIFICATION BY MASS SPECTROMETRY [LARGE SCALE ANALYSIS]</scope>
    <source>
        <tissue>Brain</tissue>
        <tissue>Liver</tissue>
        <tissue>Lung</tissue>
        <tissue>Spleen</tissue>
        <tissue>Testis</tissue>
    </source>
</reference>
<organism>
    <name type="scientific">Mus musculus</name>
    <name type="common">Mouse</name>
    <dbReference type="NCBI Taxonomy" id="10090"/>
    <lineage>
        <taxon>Eukaryota</taxon>
        <taxon>Metazoa</taxon>
        <taxon>Chordata</taxon>
        <taxon>Craniata</taxon>
        <taxon>Vertebrata</taxon>
        <taxon>Euteleostomi</taxon>
        <taxon>Mammalia</taxon>
        <taxon>Eutheria</taxon>
        <taxon>Euarchontoglires</taxon>
        <taxon>Glires</taxon>
        <taxon>Rodentia</taxon>
        <taxon>Myomorpha</taxon>
        <taxon>Muroidea</taxon>
        <taxon>Muridae</taxon>
        <taxon>Murinae</taxon>
        <taxon>Mus</taxon>
        <taxon>Mus</taxon>
    </lineage>
</organism>